<dbReference type="EMBL" id="U20860">
    <property type="protein sequence ID" value="AAA85851.1"/>
    <property type="molecule type" value="Genomic_DNA"/>
</dbReference>
<dbReference type="EMBL" id="L34579">
    <property type="protein sequence ID" value="AAA98990.1"/>
    <property type="molecule type" value="Genomic_DNA"/>
</dbReference>
<dbReference type="EMBL" id="U10273">
    <property type="protein sequence ID" value="AAA61794.1"/>
    <property type="molecule type" value="Genomic_DNA"/>
</dbReference>
<dbReference type="EMBL" id="U15592">
    <property type="protein sequence ID" value="AAA50762.1"/>
    <property type="molecule type" value="Genomic_DNA"/>
</dbReference>
<dbReference type="EMBL" id="U16957">
    <property type="protein sequence ID" value="AAA67753.1"/>
    <property type="molecule type" value="mRNA"/>
</dbReference>
<dbReference type="EMBL" id="U27478">
    <property type="protein sequence ID" value="AAA84900.1"/>
    <property type="molecule type" value="Genomic_DNA"/>
</dbReference>
<dbReference type="EMBL" id="AY536522">
    <property type="protein sequence ID" value="AAS45437.1"/>
    <property type="molecule type" value="Genomic_DNA"/>
</dbReference>
<dbReference type="EMBL" id="AY322542">
    <property type="protein sequence ID" value="AAP84355.1"/>
    <property type="molecule type" value="Genomic_DNA"/>
</dbReference>
<dbReference type="EMBL" id="AY324607">
    <property type="protein sequence ID" value="AAP72969.1"/>
    <property type="molecule type" value="Genomic_DNA"/>
</dbReference>
<dbReference type="EMBL" id="CR541969">
    <property type="protein sequence ID" value="CAG46767.1"/>
    <property type="molecule type" value="mRNA"/>
</dbReference>
<dbReference type="EMBL" id="AK313927">
    <property type="protein sequence ID" value="BAG36648.1"/>
    <property type="molecule type" value="mRNA"/>
</dbReference>
<dbReference type="EMBL" id="AL732602">
    <property type="status" value="NOT_ANNOTATED_CDS"/>
    <property type="molecule type" value="Genomic_DNA"/>
</dbReference>
<dbReference type="EMBL" id="CH471234">
    <property type="protein sequence ID" value="EAW51502.1"/>
    <property type="molecule type" value="Genomic_DNA"/>
</dbReference>
<dbReference type="EMBL" id="BC095504">
    <property type="protein sequence ID" value="AAH95504.1"/>
    <property type="molecule type" value="mRNA"/>
</dbReference>
<dbReference type="EMBL" id="X87723">
    <property type="protein sequence ID" value="CAA61022.1"/>
    <property type="molecule type" value="mRNA"/>
</dbReference>
<dbReference type="CCDS" id="CCDS14569.1"/>
<dbReference type="PIR" id="JC2543">
    <property type="entry name" value="JC2543"/>
</dbReference>
<dbReference type="RefSeq" id="NP_000677.2">
    <property type="nucleotide sequence ID" value="NM_000686.4"/>
</dbReference>
<dbReference type="RefSeq" id="NP_001372553.1">
    <property type="nucleotide sequence ID" value="NM_001385624.1"/>
</dbReference>
<dbReference type="RefSeq" id="XP_011535835.1">
    <property type="nucleotide sequence ID" value="XM_011537533.1"/>
</dbReference>
<dbReference type="PDB" id="5UNF">
    <property type="method" value="X-ray"/>
    <property type="resolution" value="2.80 A"/>
    <property type="chains" value="A/B=35-335"/>
</dbReference>
<dbReference type="PDB" id="5UNG">
    <property type="method" value="X-ray"/>
    <property type="resolution" value="2.80 A"/>
    <property type="chains" value="B=35-335"/>
</dbReference>
<dbReference type="PDB" id="5UNH">
    <property type="method" value="X-ray"/>
    <property type="resolution" value="2.90 A"/>
    <property type="chains" value="A/B=35-335"/>
</dbReference>
<dbReference type="PDB" id="5XJM">
    <property type="method" value="X-ray"/>
    <property type="resolution" value="3.20 A"/>
    <property type="chains" value="A=35-242, A=246-346"/>
</dbReference>
<dbReference type="PDB" id="6JOD">
    <property type="method" value="X-ray"/>
    <property type="resolution" value="3.20 A"/>
    <property type="chains" value="A=35-346"/>
</dbReference>
<dbReference type="PDB" id="7C6A">
    <property type="method" value="X-ray"/>
    <property type="resolution" value="3.40 A"/>
    <property type="chains" value="A=35-242, A=246-346"/>
</dbReference>
<dbReference type="PDB" id="7JNI">
    <property type="method" value="X-ray"/>
    <property type="resolution" value="3.00 A"/>
    <property type="chains" value="A/B=35-335"/>
</dbReference>
<dbReference type="PDBsum" id="5UNF"/>
<dbReference type="PDBsum" id="5UNG"/>
<dbReference type="PDBsum" id="5UNH"/>
<dbReference type="PDBsum" id="5XJM"/>
<dbReference type="PDBsum" id="6JOD"/>
<dbReference type="PDBsum" id="7C6A"/>
<dbReference type="PDBsum" id="7JNI"/>
<dbReference type="SMR" id="P50052"/>
<dbReference type="BioGRID" id="106692">
    <property type="interactions" value="11"/>
</dbReference>
<dbReference type="CORUM" id="P50052"/>
<dbReference type="FunCoup" id="P50052">
    <property type="interactions" value="805"/>
</dbReference>
<dbReference type="IntAct" id="P50052">
    <property type="interactions" value="3"/>
</dbReference>
<dbReference type="STRING" id="9606.ENSP00000360973"/>
<dbReference type="BindingDB" id="P50052"/>
<dbReference type="ChEMBL" id="CHEMBL4607"/>
<dbReference type="DrugBank" id="DB11842">
    <property type="generic name" value="Angiotensin II"/>
</dbReference>
<dbReference type="DrugBank" id="DB18038">
    <property type="generic name" value="Buloxibutid"/>
</dbReference>
<dbReference type="DrugBank" id="DB05739">
    <property type="generic name" value="CYT006-AngQb"/>
</dbReference>
<dbReference type="DrugBank" id="DB16266">
    <property type="generic name" value="Olodanrigan"/>
</dbReference>
<dbReference type="DrugBank" id="DB06763">
    <property type="generic name" value="Saralasin"/>
</dbReference>
<dbReference type="DrugBank" id="DB12548">
    <property type="generic name" value="Sparsentan"/>
</dbReference>
<dbReference type="DrugBank" id="DB01349">
    <property type="generic name" value="Tasosartan"/>
</dbReference>
<dbReference type="DrugCentral" id="P50052"/>
<dbReference type="GuidetoPHARMACOLOGY" id="35"/>
<dbReference type="TCDB" id="9.A.14.13.41">
    <property type="family name" value="the g-protein-coupled receptor (gpcr) family"/>
</dbReference>
<dbReference type="GlyCosmos" id="P50052">
    <property type="glycosylation" value="5 sites, No reported glycans"/>
</dbReference>
<dbReference type="GlyGen" id="P50052">
    <property type="glycosylation" value="5 sites"/>
</dbReference>
<dbReference type="iPTMnet" id="P50052"/>
<dbReference type="PhosphoSitePlus" id="P50052"/>
<dbReference type="BioMuta" id="AGTR2"/>
<dbReference type="DMDM" id="1703214"/>
<dbReference type="MassIVE" id="P50052"/>
<dbReference type="PaxDb" id="9606-ENSP00000360973"/>
<dbReference type="PeptideAtlas" id="P50052"/>
<dbReference type="ABCD" id="P50052">
    <property type="antibodies" value="1 sequenced antibody"/>
</dbReference>
<dbReference type="Antibodypedia" id="29644">
    <property type="antibodies" value="267 antibodies from 36 providers"/>
</dbReference>
<dbReference type="DNASU" id="186"/>
<dbReference type="Ensembl" id="ENST00000371906.5">
    <property type="protein sequence ID" value="ENSP00000360973.4"/>
    <property type="gene ID" value="ENSG00000180772.8"/>
</dbReference>
<dbReference type="Ensembl" id="ENST00000681852.1">
    <property type="protein sequence ID" value="ENSP00000505750.1"/>
    <property type="gene ID" value="ENSG00000180772.8"/>
</dbReference>
<dbReference type="GeneID" id="186"/>
<dbReference type="KEGG" id="hsa:186"/>
<dbReference type="MANE-Select" id="ENST00000371906.5">
    <property type="protein sequence ID" value="ENSP00000360973.4"/>
    <property type="RefSeq nucleotide sequence ID" value="NM_000686.5"/>
    <property type="RefSeq protein sequence ID" value="NP_000677.2"/>
</dbReference>
<dbReference type="UCSC" id="uc004eqh.5">
    <property type="organism name" value="human"/>
</dbReference>
<dbReference type="AGR" id="HGNC:338"/>
<dbReference type="CTD" id="186"/>
<dbReference type="DisGeNET" id="186"/>
<dbReference type="GeneCards" id="AGTR2"/>
<dbReference type="HGNC" id="HGNC:338">
    <property type="gene designation" value="AGTR2"/>
</dbReference>
<dbReference type="HPA" id="ENSG00000180772">
    <property type="expression patterns" value="Tissue enhanced (endometrium, lung, smooth muscle)"/>
</dbReference>
<dbReference type="MalaCards" id="AGTR2"/>
<dbReference type="MIM" id="300034">
    <property type="type" value="gene"/>
</dbReference>
<dbReference type="neXtProt" id="NX_P50052"/>
<dbReference type="OpenTargets" id="ENSG00000180772"/>
<dbReference type="Orphanet" id="777">
    <property type="disease" value="X-linked non-syndromic intellectual disability"/>
</dbReference>
<dbReference type="PharmGKB" id="PA44"/>
<dbReference type="VEuPathDB" id="HostDB:ENSG00000180772"/>
<dbReference type="eggNOG" id="KOG3656">
    <property type="taxonomic scope" value="Eukaryota"/>
</dbReference>
<dbReference type="GeneTree" id="ENSGT01130000278303"/>
<dbReference type="HOGENOM" id="CLU_009579_8_3_1"/>
<dbReference type="InParanoid" id="P50052"/>
<dbReference type="OMA" id="TFNCSHK"/>
<dbReference type="OrthoDB" id="8804420at2759"/>
<dbReference type="PAN-GO" id="P50052">
    <property type="GO annotations" value="4 GO annotations based on evolutionary models"/>
</dbReference>
<dbReference type="PhylomeDB" id="P50052"/>
<dbReference type="TreeFam" id="TF330024"/>
<dbReference type="PathwayCommons" id="P50052"/>
<dbReference type="Reactome" id="R-HSA-375276">
    <property type="pathway name" value="Peptide ligand-binding receptors"/>
</dbReference>
<dbReference type="Reactome" id="R-HSA-418594">
    <property type="pathway name" value="G alpha (i) signalling events"/>
</dbReference>
<dbReference type="SignaLink" id="P50052"/>
<dbReference type="SIGNOR" id="P50052"/>
<dbReference type="BioGRID-ORCS" id="186">
    <property type="hits" value="9 hits in 777 CRISPR screens"/>
</dbReference>
<dbReference type="GeneWiki" id="Angiotensin_II_receptor_type_2"/>
<dbReference type="GenomeRNAi" id="186"/>
<dbReference type="Pharos" id="P50052">
    <property type="development level" value="Tchem"/>
</dbReference>
<dbReference type="PRO" id="PR:P50052"/>
<dbReference type="Proteomes" id="UP000005640">
    <property type="component" value="Chromosome X"/>
</dbReference>
<dbReference type="RNAct" id="P50052">
    <property type="molecule type" value="protein"/>
</dbReference>
<dbReference type="Bgee" id="ENSG00000180772">
    <property type="expression patterns" value="Expressed in adrenal tissue and 58 other cell types or tissues"/>
</dbReference>
<dbReference type="GO" id="GO:0005886">
    <property type="term" value="C:plasma membrane"/>
    <property type="evidence" value="ECO:0000318"/>
    <property type="project" value="GO_Central"/>
</dbReference>
<dbReference type="GO" id="GO:0004945">
    <property type="term" value="F:angiotensin type II receptor activity"/>
    <property type="evidence" value="ECO:0000314"/>
    <property type="project" value="UniProtKB"/>
</dbReference>
<dbReference type="GO" id="GO:0048019">
    <property type="term" value="F:receptor antagonist activity"/>
    <property type="evidence" value="ECO:0000304"/>
    <property type="project" value="BHF-UCL"/>
</dbReference>
<dbReference type="GO" id="GO:0002033">
    <property type="term" value="P:angiotensin-mediated vasodilation involved in regulation of systemic arterial blood pressure"/>
    <property type="evidence" value="ECO:0007669"/>
    <property type="project" value="Ensembl"/>
</dbReference>
<dbReference type="GO" id="GO:0001974">
    <property type="term" value="P:blood vessel remodeling"/>
    <property type="evidence" value="ECO:0000304"/>
    <property type="project" value="BHF-UCL"/>
</dbReference>
<dbReference type="GO" id="GO:0007420">
    <property type="term" value="P:brain development"/>
    <property type="evidence" value="ECO:0000303"/>
    <property type="project" value="BHF-UCL"/>
</dbReference>
<dbReference type="GO" id="GO:0002035">
    <property type="term" value="P:brain renin-angiotensin system"/>
    <property type="evidence" value="ECO:0007669"/>
    <property type="project" value="Ensembl"/>
</dbReference>
<dbReference type="GO" id="GO:0007166">
    <property type="term" value="P:cell surface receptor signaling pathway"/>
    <property type="evidence" value="ECO:0000314"/>
    <property type="project" value="BHF-UCL"/>
</dbReference>
<dbReference type="GO" id="GO:0035640">
    <property type="term" value="P:exploration behavior"/>
    <property type="evidence" value="ECO:0007669"/>
    <property type="project" value="Ensembl"/>
</dbReference>
<dbReference type="GO" id="GO:0007186">
    <property type="term" value="P:G protein-coupled receptor signaling pathway"/>
    <property type="evidence" value="ECO:0000318"/>
    <property type="project" value="GO_Central"/>
</dbReference>
<dbReference type="GO" id="GO:0007199">
    <property type="term" value="P:G protein-coupled receptor signaling pathway coupled to cGMP nucleotide second messenger"/>
    <property type="evidence" value="ECO:0000250"/>
    <property type="project" value="BHF-UCL"/>
</dbReference>
<dbReference type="GO" id="GO:0006954">
    <property type="term" value="P:inflammatory response"/>
    <property type="evidence" value="ECO:0000318"/>
    <property type="project" value="GO_Central"/>
</dbReference>
<dbReference type="GO" id="GO:0043537">
    <property type="term" value="P:negative regulation of blood vessel endothelial cell migration"/>
    <property type="evidence" value="ECO:0000303"/>
    <property type="project" value="BHF-UCL"/>
</dbReference>
<dbReference type="GO" id="GO:0030308">
    <property type="term" value="P:negative regulation of cell growth"/>
    <property type="evidence" value="ECO:0000304"/>
    <property type="project" value="BHF-UCL"/>
</dbReference>
<dbReference type="GO" id="GO:0010459">
    <property type="term" value="P:negative regulation of heart rate"/>
    <property type="evidence" value="ECO:0000250"/>
    <property type="project" value="BHF-UCL"/>
</dbReference>
<dbReference type="GO" id="GO:0051387">
    <property type="term" value="P:negative regulation of neurotrophin TRK receptor signaling pathway"/>
    <property type="evidence" value="ECO:0000315"/>
    <property type="project" value="BHF-UCL"/>
</dbReference>
<dbReference type="GO" id="GO:0051402">
    <property type="term" value="P:neuron apoptotic process"/>
    <property type="evidence" value="ECO:0007669"/>
    <property type="project" value="Ensembl"/>
</dbReference>
<dbReference type="GO" id="GO:0038060">
    <property type="term" value="P:nitric oxide-cGMP-mediated signaling"/>
    <property type="evidence" value="ECO:0000250"/>
    <property type="project" value="BHF-UCL"/>
</dbReference>
<dbReference type="GO" id="GO:0090190">
    <property type="term" value="P:positive regulation of branching involved in ureteric bud morphogenesis"/>
    <property type="evidence" value="ECO:0007669"/>
    <property type="project" value="Ensembl"/>
</dbReference>
<dbReference type="GO" id="GO:0045893">
    <property type="term" value="P:positive regulation of DNA-templated transcription"/>
    <property type="evidence" value="ECO:0007669"/>
    <property type="project" value="Ensembl"/>
</dbReference>
<dbReference type="GO" id="GO:2001238">
    <property type="term" value="P:positive regulation of extrinsic apoptotic signaling pathway"/>
    <property type="evidence" value="ECO:0000315"/>
    <property type="project" value="BHF-UCL"/>
</dbReference>
<dbReference type="GO" id="GO:0072300">
    <property type="term" value="P:positive regulation of metanephric glomerulus development"/>
    <property type="evidence" value="ECO:0007669"/>
    <property type="project" value="Ensembl"/>
</dbReference>
<dbReference type="GO" id="GO:0008217">
    <property type="term" value="P:regulation of blood pressure"/>
    <property type="evidence" value="ECO:0000304"/>
    <property type="project" value="ProtInc"/>
</dbReference>
<dbReference type="GO" id="GO:0035566">
    <property type="term" value="P:regulation of metanephros size"/>
    <property type="evidence" value="ECO:0007669"/>
    <property type="project" value="Ensembl"/>
</dbReference>
<dbReference type="GO" id="GO:0001991">
    <property type="term" value="P:regulation of systemic arterial blood pressure by circulatory renin-angiotensin"/>
    <property type="evidence" value="ECO:0000250"/>
    <property type="project" value="BHF-UCL"/>
</dbReference>
<dbReference type="GO" id="GO:0042311">
    <property type="term" value="P:vasodilation"/>
    <property type="evidence" value="ECO:0000314"/>
    <property type="project" value="BHF-UCL"/>
</dbReference>
<dbReference type="CDD" id="cd15191">
    <property type="entry name" value="7tmA_AT2R"/>
    <property type="match status" value="1"/>
</dbReference>
<dbReference type="FunFam" id="1.20.1070.10:FF:000161">
    <property type="entry name" value="type-2 angiotensin II receptor"/>
    <property type="match status" value="1"/>
</dbReference>
<dbReference type="Gene3D" id="1.20.1070.10">
    <property type="entry name" value="Rhodopsin 7-helix transmembrane proteins"/>
    <property type="match status" value="1"/>
</dbReference>
<dbReference type="InterPro" id="IPR000147">
    <property type="entry name" value="ATII_AT2_rcpt"/>
</dbReference>
<dbReference type="InterPro" id="IPR000248">
    <property type="entry name" value="ATII_rcpt"/>
</dbReference>
<dbReference type="InterPro" id="IPR050119">
    <property type="entry name" value="CCR1-9-like"/>
</dbReference>
<dbReference type="InterPro" id="IPR000276">
    <property type="entry name" value="GPCR_Rhodpsn"/>
</dbReference>
<dbReference type="InterPro" id="IPR017452">
    <property type="entry name" value="GPCR_Rhodpsn_7TM"/>
</dbReference>
<dbReference type="PANTHER" id="PTHR10489">
    <property type="entry name" value="CELL ADHESION MOLECULE"/>
    <property type="match status" value="1"/>
</dbReference>
<dbReference type="PANTHER" id="PTHR10489:SF952">
    <property type="entry name" value="TYPE-2 ANGIOTENSIN II RECEPTOR"/>
    <property type="match status" value="1"/>
</dbReference>
<dbReference type="Pfam" id="PF00001">
    <property type="entry name" value="7tm_1"/>
    <property type="match status" value="1"/>
</dbReference>
<dbReference type="PRINTS" id="PR00241">
    <property type="entry name" value="ANGIOTENSINR"/>
</dbReference>
<dbReference type="PRINTS" id="PR00636">
    <property type="entry name" value="ANGIOTENSN2R"/>
</dbReference>
<dbReference type="PRINTS" id="PR00237">
    <property type="entry name" value="GPCRRHODOPSN"/>
</dbReference>
<dbReference type="SUPFAM" id="SSF81321">
    <property type="entry name" value="Family A G protein-coupled receptor-like"/>
    <property type="match status" value="1"/>
</dbReference>
<dbReference type="PROSITE" id="PS00237">
    <property type="entry name" value="G_PROTEIN_RECEP_F1_1"/>
    <property type="match status" value="1"/>
</dbReference>
<dbReference type="PROSITE" id="PS50262">
    <property type="entry name" value="G_PROTEIN_RECEP_F1_2"/>
    <property type="match status" value="1"/>
</dbReference>
<reference key="1">
    <citation type="journal article" date="1995" name="Biochem. Biophys. Res. Commun.">
        <title>The sequence and genomic organization of the human type 2 angiotensin II receptor.</title>
        <authorList>
            <person name="Martin M.M."/>
            <person name="Elton T.S."/>
        </authorList>
    </citation>
    <scope>NUCLEOTIDE SEQUENCE [GENOMIC DNA]</scope>
    <source>
        <tissue>Liver</tissue>
    </source>
</reference>
<reference key="2">
    <citation type="journal article" date="1995" name="Genomics">
        <title>Assignment of the human angiotensin II type 2 receptor gene (AGTR2) to chromosome Xq22-q23 by fluorescence in situ hybridization.</title>
        <authorList>
            <person name="Chassagne C."/>
            <person name="Beatty B.G."/>
            <person name="Meloche S."/>
        </authorList>
    </citation>
    <scope>NUCLEOTIDE SEQUENCE [GENOMIC DNA]</scope>
    <source>
        <tissue>Placenta</tissue>
    </source>
</reference>
<reference key="3">
    <citation type="journal article" date="1994" name="Biochem. Biophys. Res. Commun.">
        <title>Human type 2 angiotensin II receptor gene: cloned, mapped to the X chromosome, and its mRNA is expressed in the human lung.</title>
        <authorList>
            <person name="Koike G."/>
            <person name="Horiuchi M."/>
            <person name="Yamada T."/>
            <person name="Szpirer C."/>
            <person name="Jacob H.J."/>
            <person name="Dzau V.J."/>
        </authorList>
    </citation>
    <scope>NUCLEOTIDE SEQUENCE [GENOMIC DNA]</scope>
    <source>
        <tissue>Blood</tissue>
    </source>
</reference>
<reference key="4">
    <citation type="journal article" date="1994" name="Biochem. Biophys. Res. Commun.">
        <title>Molecular cloning and expression of the gene encoding human angiotensin II type 2 receptor.</title>
        <authorList>
            <person name="Tsuzuki S."/>
            <person name="Ichiki T."/>
            <person name="Nakakubo H."/>
            <person name="Kitami Y."/>
            <person name="Guo D.F."/>
            <person name="Shirai H."/>
            <person name="Inagami T."/>
        </authorList>
    </citation>
    <scope>NUCLEOTIDE SEQUENCE [GENOMIC DNA]</scope>
    <scope>FUNCTION</scope>
    <source>
        <tissue>Placenta</tissue>
    </source>
</reference>
<reference key="5">
    <citation type="journal article" date="1994" name="Biochem. Biophys. Res. Commun.">
        <title>Molecular cloning of the human angiotensin II type 2 receptor cDNA.</title>
        <authorList>
            <person name="Martin M.M."/>
            <person name="Su B."/>
            <person name="Elton T.S."/>
        </authorList>
    </citation>
    <scope>NUCLEOTIDE SEQUENCE [MRNA]</scope>
    <source>
        <tissue>Lung</tissue>
    </source>
</reference>
<reference key="6">
    <citation type="journal article" date="1994" name="Recept. Channels">
        <title>Molecular characterization and chromosome localization of a human angiotensin II AT2 receptor gene highly expressed in fetal tissues.</title>
        <authorList>
            <person name="Lazard D."/>
            <person name="Briend-Sutren M.M."/>
            <person name="Villageois P."/>
            <person name="Mattei M.-G."/>
            <person name="Strosberg A.D."/>
            <person name="Nahmias C."/>
        </authorList>
    </citation>
    <scope>NUCLEOTIDE SEQUENCE [GENOMIC DNA]</scope>
    <source>
        <tissue>Placenta</tissue>
    </source>
</reference>
<reference key="7">
    <citation type="submission" date="2004-01" db="EMBL/GenBank/DDBJ databases">
        <title>Sequence of the AGTR2 gene in Cantonese.</title>
        <authorList>
            <person name="Zhang M."/>
            <person name="Ma H."/>
            <person name="Wang B."/>
            <person name="Zhao Y."/>
        </authorList>
    </citation>
    <scope>NUCLEOTIDE SEQUENCE [GENOMIC DNA]</scope>
</reference>
<reference key="8">
    <citation type="submission" date="2003-06" db="EMBL/GenBank/DDBJ databases">
        <title>Isolation of complete coding sequence for angiotensin II receptor, type 2 (AGTR2).</title>
        <authorList>
            <person name="Kopatz S.A."/>
            <person name="Aronstam R.S."/>
            <person name="Sharma S.V."/>
        </authorList>
    </citation>
    <scope>NUCLEOTIDE SEQUENCE [GENOMIC DNA]</scope>
</reference>
<reference key="9">
    <citation type="submission" date="2004-06" db="EMBL/GenBank/DDBJ databases">
        <title>Cloning of human full open reading frames in Gateway(TM) system entry vector (pDONR201).</title>
        <authorList>
            <person name="Halleck A."/>
            <person name="Ebert L."/>
            <person name="Mkoundinya M."/>
            <person name="Schick M."/>
            <person name="Eisenstein S."/>
            <person name="Neubert P."/>
            <person name="Kstrang K."/>
            <person name="Schatten R."/>
            <person name="Shen B."/>
            <person name="Henze S."/>
            <person name="Mar W."/>
            <person name="Korn B."/>
            <person name="Zuo D."/>
            <person name="Hu Y."/>
            <person name="LaBaer J."/>
        </authorList>
    </citation>
    <scope>NUCLEOTIDE SEQUENCE [LARGE SCALE MRNA]</scope>
</reference>
<reference key="10">
    <citation type="submission" date="2003-06" db="EMBL/GenBank/DDBJ databases">
        <authorList>
            <person name="Rieder M.J."/>
            <person name="da Ponte S.H."/>
            <person name="Kuldanek S.A."/>
            <person name="Rajkumar N."/>
            <person name="Smith J.D."/>
            <person name="Toth E.J."/>
            <person name="Nickerson D.A."/>
        </authorList>
    </citation>
    <scope>NUCLEOTIDE SEQUENCE [GENOMIC DNA]</scope>
</reference>
<reference key="11">
    <citation type="journal article" date="2004" name="Nat. Genet.">
        <title>Complete sequencing and characterization of 21,243 full-length human cDNAs.</title>
        <authorList>
            <person name="Ota T."/>
            <person name="Suzuki Y."/>
            <person name="Nishikawa T."/>
            <person name="Otsuki T."/>
            <person name="Sugiyama T."/>
            <person name="Irie R."/>
            <person name="Wakamatsu A."/>
            <person name="Hayashi K."/>
            <person name="Sato H."/>
            <person name="Nagai K."/>
            <person name="Kimura K."/>
            <person name="Makita H."/>
            <person name="Sekine M."/>
            <person name="Obayashi M."/>
            <person name="Nishi T."/>
            <person name="Shibahara T."/>
            <person name="Tanaka T."/>
            <person name="Ishii S."/>
            <person name="Yamamoto J."/>
            <person name="Saito K."/>
            <person name="Kawai Y."/>
            <person name="Isono Y."/>
            <person name="Nakamura Y."/>
            <person name="Nagahari K."/>
            <person name="Murakami K."/>
            <person name="Yasuda T."/>
            <person name="Iwayanagi T."/>
            <person name="Wagatsuma M."/>
            <person name="Shiratori A."/>
            <person name="Sudo H."/>
            <person name="Hosoiri T."/>
            <person name="Kaku Y."/>
            <person name="Kodaira H."/>
            <person name="Kondo H."/>
            <person name="Sugawara M."/>
            <person name="Takahashi M."/>
            <person name="Kanda K."/>
            <person name="Yokoi T."/>
            <person name="Furuya T."/>
            <person name="Kikkawa E."/>
            <person name="Omura Y."/>
            <person name="Abe K."/>
            <person name="Kamihara K."/>
            <person name="Katsuta N."/>
            <person name="Sato K."/>
            <person name="Tanikawa M."/>
            <person name="Yamazaki M."/>
            <person name="Ninomiya K."/>
            <person name="Ishibashi T."/>
            <person name="Yamashita H."/>
            <person name="Murakawa K."/>
            <person name="Fujimori K."/>
            <person name="Tanai H."/>
            <person name="Kimata M."/>
            <person name="Watanabe M."/>
            <person name="Hiraoka S."/>
            <person name="Chiba Y."/>
            <person name="Ishida S."/>
            <person name="Ono Y."/>
            <person name="Takiguchi S."/>
            <person name="Watanabe S."/>
            <person name="Yosida M."/>
            <person name="Hotuta T."/>
            <person name="Kusano J."/>
            <person name="Kanehori K."/>
            <person name="Takahashi-Fujii A."/>
            <person name="Hara H."/>
            <person name="Tanase T.-O."/>
            <person name="Nomura Y."/>
            <person name="Togiya S."/>
            <person name="Komai F."/>
            <person name="Hara R."/>
            <person name="Takeuchi K."/>
            <person name="Arita M."/>
            <person name="Imose N."/>
            <person name="Musashino K."/>
            <person name="Yuuki H."/>
            <person name="Oshima A."/>
            <person name="Sasaki N."/>
            <person name="Aotsuka S."/>
            <person name="Yoshikawa Y."/>
            <person name="Matsunawa H."/>
            <person name="Ichihara T."/>
            <person name="Shiohata N."/>
            <person name="Sano S."/>
            <person name="Moriya S."/>
            <person name="Momiyama H."/>
            <person name="Satoh N."/>
            <person name="Takami S."/>
            <person name="Terashima Y."/>
            <person name="Suzuki O."/>
            <person name="Nakagawa S."/>
            <person name="Senoh A."/>
            <person name="Mizoguchi H."/>
            <person name="Goto Y."/>
            <person name="Shimizu F."/>
            <person name="Wakebe H."/>
            <person name="Hishigaki H."/>
            <person name="Watanabe T."/>
            <person name="Sugiyama A."/>
            <person name="Takemoto M."/>
            <person name="Kawakami B."/>
            <person name="Yamazaki M."/>
            <person name="Watanabe K."/>
            <person name="Kumagai A."/>
            <person name="Itakura S."/>
            <person name="Fukuzumi Y."/>
            <person name="Fujimori Y."/>
            <person name="Komiyama M."/>
            <person name="Tashiro H."/>
            <person name="Tanigami A."/>
            <person name="Fujiwara T."/>
            <person name="Ono T."/>
            <person name="Yamada K."/>
            <person name="Fujii Y."/>
            <person name="Ozaki K."/>
            <person name="Hirao M."/>
            <person name="Ohmori Y."/>
            <person name="Kawabata A."/>
            <person name="Hikiji T."/>
            <person name="Kobatake N."/>
            <person name="Inagaki H."/>
            <person name="Ikema Y."/>
            <person name="Okamoto S."/>
            <person name="Okitani R."/>
            <person name="Kawakami T."/>
            <person name="Noguchi S."/>
            <person name="Itoh T."/>
            <person name="Shigeta K."/>
            <person name="Senba T."/>
            <person name="Matsumura K."/>
            <person name="Nakajima Y."/>
            <person name="Mizuno T."/>
            <person name="Morinaga M."/>
            <person name="Sasaki M."/>
            <person name="Togashi T."/>
            <person name="Oyama M."/>
            <person name="Hata H."/>
            <person name="Watanabe M."/>
            <person name="Komatsu T."/>
            <person name="Mizushima-Sugano J."/>
            <person name="Satoh T."/>
            <person name="Shirai Y."/>
            <person name="Takahashi Y."/>
            <person name="Nakagawa K."/>
            <person name="Okumura K."/>
            <person name="Nagase T."/>
            <person name="Nomura N."/>
            <person name="Kikuchi H."/>
            <person name="Masuho Y."/>
            <person name="Yamashita R."/>
            <person name="Nakai K."/>
            <person name="Yada T."/>
            <person name="Nakamura Y."/>
            <person name="Ohara O."/>
            <person name="Isogai T."/>
            <person name="Sugano S."/>
        </authorList>
    </citation>
    <scope>NUCLEOTIDE SEQUENCE [LARGE SCALE MRNA]</scope>
    <source>
        <tissue>Kidney</tissue>
    </source>
</reference>
<reference key="12">
    <citation type="journal article" date="2005" name="Nature">
        <title>The DNA sequence of the human X chromosome.</title>
        <authorList>
            <person name="Ross M.T."/>
            <person name="Grafham D.V."/>
            <person name="Coffey A.J."/>
            <person name="Scherer S."/>
            <person name="McLay K."/>
            <person name="Muzny D."/>
            <person name="Platzer M."/>
            <person name="Howell G.R."/>
            <person name="Burrows C."/>
            <person name="Bird C.P."/>
            <person name="Frankish A."/>
            <person name="Lovell F.L."/>
            <person name="Howe K.L."/>
            <person name="Ashurst J.L."/>
            <person name="Fulton R.S."/>
            <person name="Sudbrak R."/>
            <person name="Wen G."/>
            <person name="Jones M.C."/>
            <person name="Hurles M.E."/>
            <person name="Andrews T.D."/>
            <person name="Scott C.E."/>
            <person name="Searle S."/>
            <person name="Ramser J."/>
            <person name="Whittaker A."/>
            <person name="Deadman R."/>
            <person name="Carter N.P."/>
            <person name="Hunt S.E."/>
            <person name="Chen R."/>
            <person name="Cree A."/>
            <person name="Gunaratne P."/>
            <person name="Havlak P."/>
            <person name="Hodgson A."/>
            <person name="Metzker M.L."/>
            <person name="Richards S."/>
            <person name="Scott G."/>
            <person name="Steffen D."/>
            <person name="Sodergren E."/>
            <person name="Wheeler D.A."/>
            <person name="Worley K.C."/>
            <person name="Ainscough R."/>
            <person name="Ambrose K.D."/>
            <person name="Ansari-Lari M.A."/>
            <person name="Aradhya S."/>
            <person name="Ashwell R.I."/>
            <person name="Babbage A.K."/>
            <person name="Bagguley C.L."/>
            <person name="Ballabio A."/>
            <person name="Banerjee R."/>
            <person name="Barker G.E."/>
            <person name="Barlow K.F."/>
            <person name="Barrett I.P."/>
            <person name="Bates K.N."/>
            <person name="Beare D.M."/>
            <person name="Beasley H."/>
            <person name="Beasley O."/>
            <person name="Beck A."/>
            <person name="Bethel G."/>
            <person name="Blechschmidt K."/>
            <person name="Brady N."/>
            <person name="Bray-Allen S."/>
            <person name="Bridgeman A.M."/>
            <person name="Brown A.J."/>
            <person name="Brown M.J."/>
            <person name="Bonnin D."/>
            <person name="Bruford E.A."/>
            <person name="Buhay C."/>
            <person name="Burch P."/>
            <person name="Burford D."/>
            <person name="Burgess J."/>
            <person name="Burrill W."/>
            <person name="Burton J."/>
            <person name="Bye J.M."/>
            <person name="Carder C."/>
            <person name="Carrel L."/>
            <person name="Chako J."/>
            <person name="Chapman J.C."/>
            <person name="Chavez D."/>
            <person name="Chen E."/>
            <person name="Chen G."/>
            <person name="Chen Y."/>
            <person name="Chen Z."/>
            <person name="Chinault C."/>
            <person name="Ciccodicola A."/>
            <person name="Clark S.Y."/>
            <person name="Clarke G."/>
            <person name="Clee C.M."/>
            <person name="Clegg S."/>
            <person name="Clerc-Blankenburg K."/>
            <person name="Clifford K."/>
            <person name="Cobley V."/>
            <person name="Cole C.G."/>
            <person name="Conquer J.S."/>
            <person name="Corby N."/>
            <person name="Connor R.E."/>
            <person name="David R."/>
            <person name="Davies J."/>
            <person name="Davis C."/>
            <person name="Davis J."/>
            <person name="Delgado O."/>
            <person name="Deshazo D."/>
            <person name="Dhami P."/>
            <person name="Ding Y."/>
            <person name="Dinh H."/>
            <person name="Dodsworth S."/>
            <person name="Draper H."/>
            <person name="Dugan-Rocha S."/>
            <person name="Dunham A."/>
            <person name="Dunn M."/>
            <person name="Durbin K.J."/>
            <person name="Dutta I."/>
            <person name="Eades T."/>
            <person name="Ellwood M."/>
            <person name="Emery-Cohen A."/>
            <person name="Errington H."/>
            <person name="Evans K.L."/>
            <person name="Faulkner L."/>
            <person name="Francis F."/>
            <person name="Frankland J."/>
            <person name="Fraser A.E."/>
            <person name="Galgoczy P."/>
            <person name="Gilbert J."/>
            <person name="Gill R."/>
            <person name="Gloeckner G."/>
            <person name="Gregory S.G."/>
            <person name="Gribble S."/>
            <person name="Griffiths C."/>
            <person name="Grocock R."/>
            <person name="Gu Y."/>
            <person name="Gwilliam R."/>
            <person name="Hamilton C."/>
            <person name="Hart E.A."/>
            <person name="Hawes A."/>
            <person name="Heath P.D."/>
            <person name="Heitmann K."/>
            <person name="Hennig S."/>
            <person name="Hernandez J."/>
            <person name="Hinzmann B."/>
            <person name="Ho S."/>
            <person name="Hoffs M."/>
            <person name="Howden P.J."/>
            <person name="Huckle E.J."/>
            <person name="Hume J."/>
            <person name="Hunt P.J."/>
            <person name="Hunt A.R."/>
            <person name="Isherwood J."/>
            <person name="Jacob L."/>
            <person name="Johnson D."/>
            <person name="Jones S."/>
            <person name="de Jong P.J."/>
            <person name="Joseph S.S."/>
            <person name="Keenan S."/>
            <person name="Kelly S."/>
            <person name="Kershaw J.K."/>
            <person name="Khan Z."/>
            <person name="Kioschis P."/>
            <person name="Klages S."/>
            <person name="Knights A.J."/>
            <person name="Kosiura A."/>
            <person name="Kovar-Smith C."/>
            <person name="Laird G.K."/>
            <person name="Langford C."/>
            <person name="Lawlor S."/>
            <person name="Leversha M."/>
            <person name="Lewis L."/>
            <person name="Liu W."/>
            <person name="Lloyd C."/>
            <person name="Lloyd D.M."/>
            <person name="Loulseged H."/>
            <person name="Loveland J.E."/>
            <person name="Lovell J.D."/>
            <person name="Lozado R."/>
            <person name="Lu J."/>
            <person name="Lyne R."/>
            <person name="Ma J."/>
            <person name="Maheshwari M."/>
            <person name="Matthews L.H."/>
            <person name="McDowall J."/>
            <person name="McLaren S."/>
            <person name="McMurray A."/>
            <person name="Meidl P."/>
            <person name="Meitinger T."/>
            <person name="Milne S."/>
            <person name="Miner G."/>
            <person name="Mistry S.L."/>
            <person name="Morgan M."/>
            <person name="Morris S."/>
            <person name="Mueller I."/>
            <person name="Mullikin J.C."/>
            <person name="Nguyen N."/>
            <person name="Nordsiek G."/>
            <person name="Nyakatura G."/>
            <person name="O'dell C.N."/>
            <person name="Okwuonu G."/>
            <person name="Palmer S."/>
            <person name="Pandian R."/>
            <person name="Parker D."/>
            <person name="Parrish J."/>
            <person name="Pasternak S."/>
            <person name="Patel D."/>
            <person name="Pearce A.V."/>
            <person name="Pearson D.M."/>
            <person name="Pelan S.E."/>
            <person name="Perez L."/>
            <person name="Porter K.M."/>
            <person name="Ramsey Y."/>
            <person name="Reichwald K."/>
            <person name="Rhodes S."/>
            <person name="Ridler K.A."/>
            <person name="Schlessinger D."/>
            <person name="Schueler M.G."/>
            <person name="Sehra H.K."/>
            <person name="Shaw-Smith C."/>
            <person name="Shen H."/>
            <person name="Sheridan E.M."/>
            <person name="Shownkeen R."/>
            <person name="Skuce C.D."/>
            <person name="Smith M.L."/>
            <person name="Sotheran E.C."/>
            <person name="Steingruber H.E."/>
            <person name="Steward C.A."/>
            <person name="Storey R."/>
            <person name="Swann R.M."/>
            <person name="Swarbreck D."/>
            <person name="Tabor P.E."/>
            <person name="Taudien S."/>
            <person name="Taylor T."/>
            <person name="Teague B."/>
            <person name="Thomas K."/>
            <person name="Thorpe A."/>
            <person name="Timms K."/>
            <person name="Tracey A."/>
            <person name="Trevanion S."/>
            <person name="Tromans A.C."/>
            <person name="d'Urso M."/>
            <person name="Verduzco D."/>
            <person name="Villasana D."/>
            <person name="Waldron L."/>
            <person name="Wall M."/>
            <person name="Wang Q."/>
            <person name="Warren J."/>
            <person name="Warry G.L."/>
            <person name="Wei X."/>
            <person name="West A."/>
            <person name="Whitehead S.L."/>
            <person name="Whiteley M.N."/>
            <person name="Wilkinson J.E."/>
            <person name="Willey D.L."/>
            <person name="Williams G."/>
            <person name="Williams L."/>
            <person name="Williamson A."/>
            <person name="Williamson H."/>
            <person name="Wilming L."/>
            <person name="Woodmansey R.L."/>
            <person name="Wray P.W."/>
            <person name="Yen J."/>
            <person name="Zhang J."/>
            <person name="Zhou J."/>
            <person name="Zoghbi H."/>
            <person name="Zorilla S."/>
            <person name="Buck D."/>
            <person name="Reinhardt R."/>
            <person name="Poustka A."/>
            <person name="Rosenthal A."/>
            <person name="Lehrach H."/>
            <person name="Meindl A."/>
            <person name="Minx P.J."/>
            <person name="Hillier L.W."/>
            <person name="Willard H.F."/>
            <person name="Wilson R.K."/>
            <person name="Waterston R.H."/>
            <person name="Rice C.M."/>
            <person name="Vaudin M."/>
            <person name="Coulson A."/>
            <person name="Nelson D.L."/>
            <person name="Weinstock G."/>
            <person name="Sulston J.E."/>
            <person name="Durbin R.M."/>
            <person name="Hubbard T."/>
            <person name="Gibbs R.A."/>
            <person name="Beck S."/>
            <person name="Rogers J."/>
            <person name="Bentley D.R."/>
        </authorList>
    </citation>
    <scope>NUCLEOTIDE SEQUENCE [LARGE SCALE GENOMIC DNA]</scope>
</reference>
<reference key="13">
    <citation type="submission" date="2005-07" db="EMBL/GenBank/DDBJ databases">
        <authorList>
            <person name="Mural R.J."/>
            <person name="Istrail S."/>
            <person name="Sutton G.G."/>
            <person name="Florea L."/>
            <person name="Halpern A.L."/>
            <person name="Mobarry C.M."/>
            <person name="Lippert R."/>
            <person name="Walenz B."/>
            <person name="Shatkay H."/>
            <person name="Dew I."/>
            <person name="Miller J.R."/>
            <person name="Flanigan M.J."/>
            <person name="Edwards N.J."/>
            <person name="Bolanos R."/>
            <person name="Fasulo D."/>
            <person name="Halldorsson B.V."/>
            <person name="Hannenhalli S."/>
            <person name="Turner R."/>
            <person name="Yooseph S."/>
            <person name="Lu F."/>
            <person name="Nusskern D.R."/>
            <person name="Shue B.C."/>
            <person name="Zheng X.H."/>
            <person name="Zhong F."/>
            <person name="Delcher A.L."/>
            <person name="Huson D.H."/>
            <person name="Kravitz S.A."/>
            <person name="Mouchard L."/>
            <person name="Reinert K."/>
            <person name="Remington K.A."/>
            <person name="Clark A.G."/>
            <person name="Waterman M.S."/>
            <person name="Eichler E.E."/>
            <person name="Adams M.D."/>
            <person name="Hunkapiller M.W."/>
            <person name="Myers E.W."/>
            <person name="Venter J.C."/>
        </authorList>
    </citation>
    <scope>NUCLEOTIDE SEQUENCE [LARGE SCALE GENOMIC DNA]</scope>
</reference>
<reference key="14">
    <citation type="journal article" date="2004" name="Genome Res.">
        <title>The status, quality, and expansion of the NIH full-length cDNA project: the Mammalian Gene Collection (MGC).</title>
        <authorList>
            <consortium name="The MGC Project Team"/>
        </authorList>
    </citation>
    <scope>NUCLEOTIDE SEQUENCE [LARGE SCALE MRNA]</scope>
</reference>
<reference key="15">
    <citation type="submission" date="1996-01" db="EMBL/GenBank/DDBJ databases">
        <authorList>
            <person name="Katsuya T."/>
            <person name="Dzau V.J."/>
        </authorList>
    </citation>
    <scope>NUCLEOTIDE SEQUENCE OF 1-22</scope>
    <source>
        <tissue>Blood</tissue>
    </source>
</reference>
<reference key="16">
    <citation type="submission" date="1995-06" db="EMBL/GenBank/DDBJ databases">
        <authorList>
            <person name="Warnecke C.H."/>
            <person name="Holzmeister J."/>
            <person name="Regitz-Zagrosek V."/>
            <person name="Fleck E."/>
        </authorList>
    </citation>
    <scope>NUCLEOTIDE SEQUENCE OF 1-16</scope>
    <source>
        <tissue>Uterus</tissue>
    </source>
</reference>
<reference key="17">
    <citation type="journal article" date="2002" name="Science">
        <title>AGTR2 mutations in X-linked mental retardation.</title>
        <authorList>
            <person name="Vervoort V.S."/>
            <person name="Beachem M.A."/>
            <person name="Edwards P.S."/>
            <person name="Ladd S."/>
            <person name="Miller K.E."/>
            <person name="de Mollerat X."/>
            <person name="Clarkson K."/>
            <person name="DuPont B."/>
            <person name="Schwartz C.E."/>
            <person name="Stevenson R.E."/>
            <person name="Boyd E."/>
            <person name="Srivastava A.K."/>
        </authorList>
    </citation>
    <scope>TISSUE SPECIFICITY</scope>
    <scope>VARIANTS VAL-21; LYS-248; GLN-324 AND VAL-337</scope>
    <scope>POSSIBLE ASSOCIATION OF VARIANTS VAL-21; GLN-324 AND VAL-337 WITH X-LINKED INTELLECTUAL DISABILITY</scope>
</reference>
<reference key="18">
    <citation type="journal article" date="2004" name="J. Biol. Chem.">
        <title>Trans-inactivation of receptor tyrosine kinases by novel angiotensin II AT2 receptor-interacting protein, ATIP.</title>
        <authorList>
            <person name="Nouet S."/>
            <person name="Amzallag N."/>
            <person name="Li J.-M."/>
            <person name="Louis S."/>
            <person name="Seitz I."/>
            <person name="Cui T.-X."/>
            <person name="Alleaume A.-M."/>
            <person name="Di Benedetto M."/>
            <person name="Boden C."/>
            <person name="Masson M."/>
            <person name="Strosberg A.D."/>
            <person name="Horiuchi M."/>
            <person name="Couraud P.-O."/>
            <person name="Nahmias C."/>
        </authorList>
    </citation>
    <scope>INTERACTION WITH MTUS1</scope>
    <scope>FUNCTION</scope>
</reference>
<reference key="19">
    <citation type="journal article" date="2013" name="Am. J. Hum. Genet.">
        <title>XLID-causing mutations and associated genes challenged in light of data from large-scale human exome sequencing.</title>
        <authorList>
            <person name="Piton A."/>
            <person name="Redin C."/>
            <person name="Mandel J.L."/>
        </authorList>
    </citation>
    <scope>LACK OF ASSOCIATION VARIANTS VAL-21; GLN-324 AND VAL-337 WITH X-LINKED INTELLECTUAL DISABILITY</scope>
</reference>
<reference evidence="20 21 22" key="20">
    <citation type="journal article" date="2017" name="Nature">
        <title>Structural basis for selectivity and diversity in angiotensin II receptors.</title>
        <authorList>
            <person name="Zhang H."/>
            <person name="Han G.W."/>
            <person name="Batyuk A."/>
            <person name="Ishchenko A."/>
            <person name="White K.L."/>
            <person name="Patel N."/>
            <person name="Sadybekov A."/>
            <person name="Zamlynny B."/>
            <person name="Rudd M.T."/>
            <person name="Hollenstein K."/>
            <person name="Tolstikova A."/>
            <person name="White T.A."/>
            <person name="Hunter M.S."/>
            <person name="Weierstall U."/>
            <person name="Liu W."/>
            <person name="Babaoglu K."/>
            <person name="Moore E.L."/>
            <person name="Katz R.D."/>
            <person name="Shipman J.M."/>
            <person name="Garcia-Calvo M."/>
            <person name="Sharma S."/>
            <person name="Sheth P."/>
            <person name="Soisson S.M."/>
            <person name="Stevens R.C."/>
            <person name="Katritch V."/>
            <person name="Cherezov V."/>
        </authorList>
    </citation>
    <scope>X-RAY CRYSTALLOGRAPHY (2.80 ANGSTROMS) OF 35-335</scope>
    <scope>FUNCTION</scope>
    <scope>DISULFIDE BONDS</scope>
    <scope>TOPOLOGY</scope>
    <scope>SUBCELLULAR LOCATION</scope>
    <scope>MUTAGENESIS OF ARG-182 AND LYS-215</scope>
</reference>
<reference evidence="23" key="21">
    <citation type="journal article" date="2018" name="Nat. Struct. Mol. Biol.">
        <title>Crystal structure of the human angiotensin II type 2 receptor bound to an angiotensin II analog.</title>
        <authorList>
            <person name="Asada H."/>
            <person name="Horita S."/>
            <person name="Hirata K."/>
            <person name="Shiroishi M."/>
            <person name="Shiimura Y."/>
            <person name="Iwanari H."/>
            <person name="Hamakubo T."/>
            <person name="Shimamura T."/>
            <person name="Nomura N."/>
            <person name="Kusano-Arai O."/>
            <person name="Uemura T."/>
            <person name="Suno C."/>
            <person name="Kobayashi T."/>
            <person name="Iwata S."/>
        </authorList>
    </citation>
    <scope>X-RAY CRYSTALLOGRAPHY (3.20 ANGSTROMS) OF 35-242 AND 246-346 IN COMPLEX WITH ANGIOTENSIN II</scope>
    <scope>FUNCTION</scope>
    <scope>DISULFIDE BONDS</scope>
    <scope>TOPOLOGY</scope>
    <scope>SUBCELLULAR LOCATION</scope>
    <scope>MUTAGENESIS OF TYR-108; MET-128; ARG-182; LYS-215; TRP-269; PHE-272 AND ASP-297</scope>
</reference>
<reference evidence="25" key="22">
    <citation type="journal article" date="2020" name="Sci. Rep.">
        <title>The discovery of a new antibody for BRIL-fused GPCR structure determination.</title>
        <authorList>
            <person name="Miyagi H."/>
            <person name="Asada H."/>
            <person name="Suzuki M."/>
            <person name="Takahashi Y."/>
            <person name="Yasunaga M."/>
            <person name="Suno C."/>
            <person name="Iwata S."/>
            <person name="Saito J.I."/>
        </authorList>
    </citation>
    <scope>X-RAY CRYSTALLOGRAPHY (3.40 ANGSTROMS) OF 35-242 AND 246-346</scope>
    <scope>DISULFIDE BONDS</scope>
    <scope>TOPOLOGY</scope>
    <scope>SUBCELLULAR LOCATION</scope>
</reference>
<reference evidence="24" key="23">
    <citation type="journal article" date="2020" name="Structure">
        <title>The crystal structure of angiotensin II type 2 receptor with endogenous peptide hormone.</title>
        <authorList>
            <person name="Asada H."/>
            <person name="Inoue A."/>
            <person name="Ngako Kadji F.M."/>
            <person name="Hirata K."/>
            <person name="Shiimura Y."/>
            <person name="Im D."/>
            <person name="Shimamura T."/>
            <person name="Nomura N."/>
            <person name="Iwanari H."/>
            <person name="Hamakubo T."/>
            <person name="Kusano-Arai O."/>
            <person name="Hisano H."/>
            <person name="Uemura T."/>
            <person name="Suno C."/>
            <person name="Aoki J."/>
            <person name="Iwata S."/>
        </authorList>
    </citation>
    <scope>X-RAY CRYSTALLOGRAPHY (3.20 ANGSTROMS) OF 35-346 IN COMPLEX WITH ANGIOTENSIN II</scope>
    <scope>FUNCTION</scope>
    <scope>DISULFIDE BONDS</scope>
    <scope>TOPOLOGY</scope>
    <scope>SUBCELLULAR LOCATION</scope>
    <scope>MUTAGENESIS OF TYR-104; MET-128; ARG-182; LYS-215; TRP-269; PHE-272; ASP-297 AND PHE-308</scope>
</reference>
<name>AGTR2_HUMAN</name>
<keyword id="KW-0002">3D-structure</keyword>
<keyword id="KW-1003">Cell membrane</keyword>
<keyword id="KW-1015">Disulfide bond</keyword>
<keyword id="KW-0297">G-protein coupled receptor</keyword>
<keyword id="KW-0325">Glycoprotein</keyword>
<keyword id="KW-0472">Membrane</keyword>
<keyword id="KW-1267">Proteomics identification</keyword>
<keyword id="KW-0675">Receptor</keyword>
<keyword id="KW-1185">Reference proteome</keyword>
<keyword id="KW-0807">Transducer</keyword>
<keyword id="KW-0812">Transmembrane</keyword>
<keyword id="KW-1133">Transmembrane helix</keyword>
<proteinExistence type="evidence at protein level"/>
<sequence>MKGNSTLATTSKNITSGLHFGLVNISGNNESTLNCSQKPSDKHLDAIPILYYIIFVIGFLVNIVVVTLFCCQKGPKKVSSIYIFNLAVADLLLLATLPLWATYYSYRYDWLFGPVMCKVFGSFLTLNMFASIFFITCMSVDRYQSVIYPFLSQRRNPWQASYIVPLVWCMACLSSLPTFYFRDVRTIEYLGVNACIMAFPPEKYAQWSAGIALMKNILGFIIPLIFIATCYFGIRKHLLKTNSYGKNRITRDQVLKMAAAVVLAFIICWLPFHVLTFLDALAWMGVINSCEVIAVIDLALPFAILLGFTNSCVNPFLYCFVGNRFQQKLRSVFRVPITWLQGKRESMSCRKSSSLREMETFVS</sequence>
<comment type="function">
    <text evidence="5 7 8 9 11">Receptor for angiotensin II, a vasoconstricting peptide (PubMed:28379944, PubMed:29967536, PubMed:31899086, PubMed:8185599). Signals primarily via a non-canonical G-protein- and beta-arrestin independent pathways (PubMed:28379944). Cooperates with MTUS1 to inhibit ERK2 activation and cell proliferation (PubMed:15123706).</text>
</comment>
<comment type="subunit">
    <text evidence="5">Interacts with MTUS1.</text>
</comment>
<comment type="interaction">
    <interactant intactId="EBI-1748067">
        <id>P50052</id>
    </interactant>
    <interactant intactId="EBI-2927577">
        <id>PRO_0000032459</id>
        <label>AGT</label>
        <dbReference type="UniProtKB" id="P01019"/>
    </interactant>
    <organismsDiffer>false</organismsDiffer>
    <experiments>2</experiments>
</comment>
<comment type="interaction">
    <interactant intactId="EBI-1748067">
        <id>P50052</id>
    </interactant>
    <interactant intactId="EBI-1748085">
        <id>P35625</id>
        <label>TIMP3</label>
    </interactant>
    <organismsDiffer>false</organismsDiffer>
    <experiments>7</experiments>
</comment>
<comment type="subcellular location">
    <subcellularLocation>
        <location evidence="1">Cell membrane</location>
        <topology evidence="7 8 9 10">Multi-pass membrane protein</topology>
    </subcellularLocation>
</comment>
<comment type="tissue specificity">
    <text evidence="4">In adult, highly expressed in myometrium with lower levels in adrenal gland and fallopian tube. Expressed in the cerebellum. Very highly expressed in fetal kidney and intestine.</text>
</comment>
<comment type="domain">
    <text evidence="7">Helix VIII may act as a gatekeeper for either suppression or activation of the receptor, depending on post-translational modifications and interactions with various receptor partners (PubMed:28379944). Helix VIII is found in a non-canonical position, stabilizing the active-like state, but at the same time preventing the recruitment of G-proteins or beta-arrestins (PubMed:28379944). Upon switching to a membrane-bound conformation, helix VIII can support the recruitment of G proteins and beta-arrestins (PubMed:28379944).</text>
</comment>
<comment type="similarity">
    <text evidence="3">Belongs to the G-protein coupled receptor 1 family.</text>
</comment>
<comment type="caution">
    <text evidence="16 17">AGTR2 has been reported to be involved in X-linked intellectual disability (PubMed:12089445). Its pathological role is however questionable (PubMed:23871722).</text>
</comment>
<protein>
    <recommendedName>
        <fullName evidence="13">Type-2 angiotensin II receptor</fullName>
    </recommendedName>
    <alternativeName>
        <fullName evidence="14">Angiotensin II type-2 receptor</fullName>
        <shortName evidence="12">AT2 receptor</shortName>
    </alternativeName>
</protein>
<gene>
    <name evidence="14 19" type="primary">AGTR2</name>
</gene>
<evidence type="ECO:0000250" key="1">
    <source>
        <dbReference type="UniProtKB" id="P35374"/>
    </source>
</evidence>
<evidence type="ECO:0000255" key="2"/>
<evidence type="ECO:0000255" key="3">
    <source>
        <dbReference type="PROSITE-ProRule" id="PRU00521"/>
    </source>
</evidence>
<evidence type="ECO:0000269" key="4">
    <source>
    </source>
</evidence>
<evidence type="ECO:0000269" key="5">
    <source>
    </source>
</evidence>
<evidence type="ECO:0000269" key="6">
    <source>
    </source>
</evidence>
<evidence type="ECO:0000269" key="7">
    <source>
    </source>
</evidence>
<evidence type="ECO:0000269" key="8">
    <source>
    </source>
</evidence>
<evidence type="ECO:0000269" key="9">
    <source>
    </source>
</evidence>
<evidence type="ECO:0000269" key="10">
    <source>
    </source>
</evidence>
<evidence type="ECO:0000269" key="11">
    <source>
    </source>
</evidence>
<evidence type="ECO:0000303" key="12">
    <source>
    </source>
</evidence>
<evidence type="ECO:0000303" key="13">
    <source>
    </source>
</evidence>
<evidence type="ECO:0000303" key="14">
    <source>
    </source>
</evidence>
<evidence type="ECO:0000305" key="15"/>
<evidence type="ECO:0000305" key="16">
    <source>
    </source>
</evidence>
<evidence type="ECO:0000305" key="17">
    <source>
    </source>
</evidence>
<evidence type="ECO:0000305" key="18">
    <source>
    </source>
</evidence>
<evidence type="ECO:0000312" key="19">
    <source>
        <dbReference type="HGNC" id="HGNC:338"/>
    </source>
</evidence>
<evidence type="ECO:0007744" key="20">
    <source>
        <dbReference type="PDB" id="5UNF"/>
    </source>
</evidence>
<evidence type="ECO:0007744" key="21">
    <source>
        <dbReference type="PDB" id="5UNG"/>
    </source>
</evidence>
<evidence type="ECO:0007744" key="22">
    <source>
        <dbReference type="PDB" id="5UNH"/>
    </source>
</evidence>
<evidence type="ECO:0007744" key="23">
    <source>
        <dbReference type="PDB" id="5XJM"/>
    </source>
</evidence>
<evidence type="ECO:0007744" key="24">
    <source>
        <dbReference type="PDB" id="6JOD"/>
    </source>
</evidence>
<evidence type="ECO:0007744" key="25">
    <source>
        <dbReference type="PDB" id="7C6A"/>
    </source>
</evidence>
<evidence type="ECO:0007829" key="26">
    <source>
        <dbReference type="PDB" id="5UNF"/>
    </source>
</evidence>
<evidence type="ECO:0007829" key="27">
    <source>
        <dbReference type="PDB" id="5UNG"/>
    </source>
</evidence>
<evidence type="ECO:0007829" key="28">
    <source>
        <dbReference type="PDB" id="6JOD"/>
    </source>
</evidence>
<evidence type="ECO:0007829" key="29">
    <source>
        <dbReference type="PDB" id="7C6A"/>
    </source>
</evidence>
<organism>
    <name type="scientific">Homo sapiens</name>
    <name type="common">Human</name>
    <dbReference type="NCBI Taxonomy" id="9606"/>
    <lineage>
        <taxon>Eukaryota</taxon>
        <taxon>Metazoa</taxon>
        <taxon>Chordata</taxon>
        <taxon>Craniata</taxon>
        <taxon>Vertebrata</taxon>
        <taxon>Euteleostomi</taxon>
        <taxon>Mammalia</taxon>
        <taxon>Eutheria</taxon>
        <taxon>Euarchontoglires</taxon>
        <taxon>Primates</taxon>
        <taxon>Haplorrhini</taxon>
        <taxon>Catarrhini</taxon>
        <taxon>Hominidae</taxon>
        <taxon>Homo</taxon>
    </lineage>
</organism>
<feature type="chain" id="PRO_0000069167" description="Type-2 angiotensin II receptor">
    <location>
        <begin position="1"/>
        <end position="363"/>
    </location>
</feature>
<feature type="topological domain" description="Extracellular" evidence="7 8 9 10 20 21 22 23 24 25">
    <location>
        <begin position="1"/>
        <end position="45"/>
    </location>
</feature>
<feature type="transmembrane region" description="Helical; Name=1" evidence="7 8 9 10 20 21 22 23 24 25">
    <location>
        <begin position="46"/>
        <end position="70"/>
    </location>
</feature>
<feature type="topological domain" description="Cytoplasmic" evidence="7 8 9 10 20 21 22 23 24 25">
    <location>
        <begin position="71"/>
        <end position="80"/>
    </location>
</feature>
<feature type="transmembrane region" description="Helical; Name=2" evidence="7 8 9 10 20 21 22 23 24 25">
    <location>
        <begin position="81"/>
        <end position="104"/>
    </location>
</feature>
<feature type="topological domain" description="Extracellular" evidence="7 8 9 10 20 21 22 23 24 25">
    <location>
        <begin position="105"/>
        <end position="114"/>
    </location>
</feature>
<feature type="transmembrane region" description="Helical; Name=3" evidence="7 8 9 10 20 21 22 23 24 25">
    <location>
        <begin position="115"/>
        <end position="140"/>
    </location>
</feature>
<feature type="topological domain" description="Cytoplasmic" evidence="7 8 9 10 20 21 22 23 24 25">
    <location>
        <begin position="141"/>
        <end position="159"/>
    </location>
</feature>
<feature type="transmembrane region" description="Helical; Name=4" evidence="7 8 9 10 20 21 22 23 24 25">
    <location>
        <begin position="160"/>
        <end position="181"/>
    </location>
</feature>
<feature type="topological domain" description="Extracellular" evidence="7 8 9 10 20 21 22 23 24 25">
    <location>
        <begin position="182"/>
        <end position="206"/>
    </location>
</feature>
<feature type="transmembrane region" description="Helical; Name=5" evidence="7 8 9 10 20 21 22 23 24 25">
    <location>
        <begin position="207"/>
        <end position="232"/>
    </location>
</feature>
<feature type="topological domain" description="Cytoplasmic" evidence="7 8 9 10 20 21 22 23 24 25">
    <location>
        <begin position="233"/>
        <end position="257"/>
    </location>
</feature>
<feature type="transmembrane region" description="Helical; Name=6" evidence="7 8 9 10 20 21 22 23 24 25">
    <location>
        <begin position="258"/>
        <end position="281"/>
    </location>
</feature>
<feature type="topological domain" description="Extracellular" evidence="7 8 9 10 20 21 22 23 24 25">
    <location>
        <begin position="282"/>
        <end position="294"/>
    </location>
</feature>
<feature type="transmembrane region" description="Helical; Name=7" evidence="7 8 9 10 20 21 22 23 24 25">
    <location>
        <begin position="295"/>
        <end position="320"/>
    </location>
</feature>
<feature type="topological domain" description="Cytoplasmic" evidence="7 8 9 10 20 21 22 23 24 25">
    <location>
        <begin position="321"/>
        <end position="363"/>
    </location>
</feature>
<feature type="region of interest" description="Helix VIII" evidence="7">
    <location>
        <begin position="324"/>
        <end position="333"/>
    </location>
</feature>
<feature type="binding site" evidence="18 24">
    <location>
        <position position="103"/>
    </location>
    <ligand>
        <name>angiotensin II</name>
        <dbReference type="ChEBI" id="CHEBI:58506"/>
    </ligand>
</feature>
<feature type="binding site" evidence="18 24">
    <location>
        <position position="104"/>
    </location>
    <ligand>
        <name>angiotensin II</name>
        <dbReference type="ChEBI" id="CHEBI:58506"/>
    </ligand>
</feature>
<feature type="binding site" evidence="18 24">
    <location>
        <position position="182"/>
    </location>
    <ligand>
        <name>angiotensin II</name>
        <dbReference type="ChEBI" id="CHEBI:58506"/>
    </ligand>
</feature>
<feature type="binding site" evidence="18 24">
    <location>
        <position position="204"/>
    </location>
    <ligand>
        <name>angiotensin II</name>
        <dbReference type="ChEBI" id="CHEBI:58506"/>
    </ligand>
</feature>
<feature type="binding site" evidence="8 18 23 24">
    <location>
        <position position="215"/>
    </location>
    <ligand>
        <name>angiotensin II</name>
        <dbReference type="ChEBI" id="CHEBI:58506"/>
    </ligand>
</feature>
<feature type="binding site" evidence="8 18 23 24">
    <location>
        <position position="279"/>
    </location>
    <ligand>
        <name>angiotensin II</name>
        <dbReference type="ChEBI" id="CHEBI:58506"/>
    </ligand>
</feature>
<feature type="binding site" evidence="8 23">
    <location>
        <position position="297"/>
    </location>
    <ligand>
        <name>angiotensin II</name>
        <dbReference type="ChEBI" id="CHEBI:58506"/>
    </ligand>
</feature>
<feature type="glycosylation site" description="N-linked (GlcNAc...) asparagine" evidence="2">
    <location>
        <position position="4"/>
    </location>
</feature>
<feature type="glycosylation site" description="N-linked (GlcNAc...) asparagine" evidence="2">
    <location>
        <position position="13"/>
    </location>
</feature>
<feature type="glycosylation site" description="N-linked (GlcNAc...) asparagine" evidence="2">
    <location>
        <position position="24"/>
    </location>
</feature>
<feature type="glycosylation site" description="N-linked (GlcNAc...) asparagine" evidence="2">
    <location>
        <position position="29"/>
    </location>
</feature>
<feature type="glycosylation site" description="N-linked (GlcNAc...) asparagine" evidence="2">
    <location>
        <position position="34"/>
    </location>
</feature>
<feature type="disulfide bond" evidence="7 8 9 10 20 21 22 23 24 25">
    <location>
        <begin position="35"/>
        <end position="290"/>
    </location>
</feature>
<feature type="disulfide bond" evidence="7 8 9 10 20 21 22 23 24 25">
    <location>
        <begin position="117"/>
        <end position="195"/>
    </location>
</feature>
<feature type="sequence variant" id="VAR_065946" description="Found in patients with X-linked intellectual disability; uncertain significance; dbSNP:rs121917810." evidence="4 6">
    <original>G</original>
    <variation>V</variation>
    <location>
        <position position="21"/>
    </location>
</feature>
<feature type="sequence variant" id="VAR_049374" description="In dbSNP:rs3729977.">
    <original>Y</original>
    <variation>H</variation>
    <location>
        <position position="231"/>
    </location>
</feature>
<feature type="sequence variant" id="VAR_011849" description="In dbSNP:rs5191." evidence="4">
    <original>R</original>
    <variation>K</variation>
    <location>
        <position position="248"/>
    </location>
</feature>
<feature type="sequence variant" id="VAR_011850" description="In dbSNP:rs1042860.">
    <original>C</original>
    <variation>W</variation>
    <location>
        <position position="268"/>
    </location>
</feature>
<feature type="sequence variant" id="VAR_065947" description="Found in patients with X-linked intellectual disability; uncertain significance; dbSNP:rs35474657." evidence="4 6">
    <original>R</original>
    <variation>Q</variation>
    <location>
        <position position="324"/>
    </location>
</feature>
<feature type="sequence variant" id="VAR_065948" description="Found in patients with X-linked intellectual disability; uncertain significance; dbSNP:rs121917811." evidence="4">
    <original>I</original>
    <variation>V</variation>
    <location>
        <position position="337"/>
    </location>
</feature>
<feature type="mutagenesis site" description="Abolished angiotensin II-binding." evidence="9">
    <original>Y</original>
    <variation>A</variation>
    <location>
        <position position="104"/>
    </location>
</feature>
<feature type="mutagenesis site" description="Abolished angiotensin II-binding." evidence="8">
    <original>Y</original>
    <variation>A</variation>
    <location>
        <position position="108"/>
    </location>
</feature>
<feature type="mutagenesis site" description="Abolished angiotensin II-binding." evidence="9">
    <original>M</original>
    <variation>A</variation>
    <location>
        <position position="128"/>
    </location>
</feature>
<feature type="mutagenesis site" description="Does not affect angiotensin II-binding." evidence="8 9">
    <original>M</original>
    <variation>L</variation>
    <location>
        <position position="128"/>
    </location>
</feature>
<feature type="mutagenesis site" description="Abolished angiotensin II-binding." evidence="7 8 9">
    <original>R</original>
    <variation>A</variation>
    <location>
        <position position="182"/>
    </location>
</feature>
<feature type="mutagenesis site" description="Abolished angiotensin II-binding." evidence="7 8 9">
    <original>K</original>
    <variation>A</variation>
    <variation>Q</variation>
    <location>
        <position position="215"/>
    </location>
</feature>
<feature type="mutagenesis site" description="Abolished angiotensin II-binding." evidence="9">
    <original>W</original>
    <variation>A</variation>
    <location>
        <position position="269"/>
    </location>
</feature>
<feature type="mutagenesis site" description="Abolished angiotensin II-binding." evidence="8 9">
    <original>F</original>
    <variation>A</variation>
    <location>
        <position position="272"/>
    </location>
</feature>
<feature type="mutagenesis site" description="Does not affect angiotensin II-binding." evidence="9">
    <original>F</original>
    <variation>H</variation>
    <location>
        <position position="272"/>
    </location>
</feature>
<feature type="mutagenesis site" description="Abolished angiotensin II-binding." evidence="8 9">
    <original>D</original>
    <variation>A</variation>
    <location>
        <position position="297"/>
    </location>
</feature>
<feature type="mutagenesis site" description="Abolished angiotensin II-binding." evidence="9">
    <original>F</original>
    <variation>Y</variation>
    <location>
        <position position="308"/>
    </location>
</feature>
<feature type="sequence conflict" description="In Ref. 5." evidence="15" ref="5">
    <original>W</original>
    <variation>C</variation>
    <location>
        <position position="269"/>
    </location>
</feature>
<feature type="sequence conflict" description="In Ref. 4; AAA50762." evidence="15" ref="4">
    <original>F</original>
    <variation>L</variation>
    <location>
        <position position="272"/>
    </location>
</feature>
<feature type="sequence conflict" description="In Ref. 4; AAA50762." evidence="15" ref="4">
    <original>N</original>
    <variation>G</variation>
    <location>
        <position position="323"/>
    </location>
</feature>
<feature type="turn" evidence="26">
    <location>
        <begin position="39"/>
        <end position="42"/>
    </location>
</feature>
<feature type="helix" evidence="29">
    <location>
        <begin position="43"/>
        <end position="45"/>
    </location>
</feature>
<feature type="helix" evidence="26">
    <location>
        <begin position="46"/>
        <end position="71"/>
    </location>
</feature>
<feature type="helix" evidence="26">
    <location>
        <begin position="79"/>
        <end position="94"/>
    </location>
</feature>
<feature type="helix" evidence="26">
    <location>
        <begin position="97"/>
        <end position="105"/>
    </location>
</feature>
<feature type="turn" evidence="28">
    <location>
        <begin position="106"/>
        <end position="108"/>
    </location>
</feature>
<feature type="helix" evidence="26">
    <location>
        <begin position="113"/>
        <end position="147"/>
    </location>
</feature>
<feature type="helix" evidence="27">
    <location>
        <begin position="149"/>
        <end position="151"/>
    </location>
</feature>
<feature type="strand" evidence="28">
    <location>
        <begin position="153"/>
        <end position="155"/>
    </location>
</feature>
<feature type="helix" evidence="26">
    <location>
        <begin position="159"/>
        <end position="174"/>
    </location>
</feature>
<feature type="helix" evidence="26">
    <location>
        <begin position="176"/>
        <end position="181"/>
    </location>
</feature>
<feature type="strand" evidence="26">
    <location>
        <begin position="182"/>
        <end position="186"/>
    </location>
</feature>
<feature type="turn" evidence="26">
    <location>
        <begin position="188"/>
        <end position="190"/>
    </location>
</feature>
<feature type="strand" evidence="26">
    <location>
        <begin position="193"/>
        <end position="197"/>
    </location>
</feature>
<feature type="helix" evidence="26">
    <location>
        <begin position="201"/>
        <end position="203"/>
    </location>
</feature>
<feature type="helix" evidence="26">
    <location>
        <begin position="205"/>
        <end position="219"/>
    </location>
</feature>
<feature type="helix" evidence="26">
    <location>
        <begin position="221"/>
        <end position="240"/>
    </location>
</feature>
<feature type="helix" evidence="26">
    <location>
        <begin position="246"/>
        <end position="283"/>
    </location>
</feature>
<feature type="helix" evidence="26">
    <location>
        <begin position="290"/>
        <end position="318"/>
    </location>
</feature>
<feature type="turn" evidence="26">
    <location>
        <begin position="319"/>
        <end position="321"/>
    </location>
</feature>
<feature type="helix" evidence="26">
    <location>
        <begin position="322"/>
        <end position="333"/>
    </location>
</feature>
<feature type="helix" evidence="28">
    <location>
        <begin position="335"/>
        <end position="339"/>
    </location>
</feature>
<accession>P50052</accession>
<accession>B2R9V1</accession>
<accession>Q13016</accession>
<accession>Q6FGY7</accession>